<proteinExistence type="inferred from homology"/>
<protein>
    <recommendedName>
        <fullName evidence="1">2-succinyl-5-enolpyruvyl-6-hydroxy-3-cyclohexene-1-carboxylate synthase</fullName>
        <shortName evidence="1">SEPHCHC synthase</shortName>
        <ecNumber evidence="1">2.2.1.9</ecNumber>
    </recommendedName>
    <alternativeName>
        <fullName evidence="1">Menaquinone biosynthesis protein MenD</fullName>
    </alternativeName>
</protein>
<name>MEND_MYCVP</name>
<reference key="1">
    <citation type="submission" date="2006-12" db="EMBL/GenBank/DDBJ databases">
        <title>Complete sequence of Mycobacterium vanbaalenii PYR-1.</title>
        <authorList>
            <consortium name="US DOE Joint Genome Institute"/>
            <person name="Copeland A."/>
            <person name="Lucas S."/>
            <person name="Lapidus A."/>
            <person name="Barry K."/>
            <person name="Detter J.C."/>
            <person name="Glavina del Rio T."/>
            <person name="Hammon N."/>
            <person name="Israni S."/>
            <person name="Dalin E."/>
            <person name="Tice H."/>
            <person name="Pitluck S."/>
            <person name="Singan V."/>
            <person name="Schmutz J."/>
            <person name="Larimer F."/>
            <person name="Land M."/>
            <person name="Hauser L."/>
            <person name="Kyrpides N."/>
            <person name="Anderson I.J."/>
            <person name="Miller C."/>
            <person name="Richardson P."/>
        </authorList>
    </citation>
    <scope>NUCLEOTIDE SEQUENCE [LARGE SCALE GENOMIC DNA]</scope>
    <source>
        <strain>DSM 7251 / JCM 13017 / BCRC 16820 / KCTC 9966 / NRRL B-24157 / PYR-1</strain>
    </source>
</reference>
<gene>
    <name evidence="1" type="primary">menD</name>
    <name type="ordered locus">Mvan_0975</name>
</gene>
<dbReference type="EC" id="2.2.1.9" evidence="1"/>
<dbReference type="EMBL" id="CP000511">
    <property type="protein sequence ID" value="ABM11813.1"/>
    <property type="status" value="ALT_INIT"/>
    <property type="molecule type" value="Genomic_DNA"/>
</dbReference>
<dbReference type="RefSeq" id="WP_041307526.1">
    <property type="nucleotide sequence ID" value="NC_008726.1"/>
</dbReference>
<dbReference type="SMR" id="A1T3R3"/>
<dbReference type="STRING" id="350058.Mvan_0975"/>
<dbReference type="KEGG" id="mva:Mvan_0975"/>
<dbReference type="eggNOG" id="COG1165">
    <property type="taxonomic scope" value="Bacteria"/>
</dbReference>
<dbReference type="HOGENOM" id="CLU_006051_4_1_11"/>
<dbReference type="UniPathway" id="UPA00079"/>
<dbReference type="UniPathway" id="UPA01057">
    <property type="reaction ID" value="UER00164"/>
</dbReference>
<dbReference type="Proteomes" id="UP000009159">
    <property type="component" value="Chromosome"/>
</dbReference>
<dbReference type="GO" id="GO:0070204">
    <property type="term" value="F:2-succinyl-5-enolpyruvyl-6-hydroxy-3-cyclohexene-1-carboxylic-acid synthase activity"/>
    <property type="evidence" value="ECO:0007669"/>
    <property type="project" value="UniProtKB-UniRule"/>
</dbReference>
<dbReference type="GO" id="GO:0000287">
    <property type="term" value="F:magnesium ion binding"/>
    <property type="evidence" value="ECO:0007669"/>
    <property type="project" value="UniProtKB-UniRule"/>
</dbReference>
<dbReference type="GO" id="GO:0030145">
    <property type="term" value="F:manganese ion binding"/>
    <property type="evidence" value="ECO:0007669"/>
    <property type="project" value="UniProtKB-UniRule"/>
</dbReference>
<dbReference type="GO" id="GO:0030976">
    <property type="term" value="F:thiamine pyrophosphate binding"/>
    <property type="evidence" value="ECO:0007669"/>
    <property type="project" value="UniProtKB-UniRule"/>
</dbReference>
<dbReference type="GO" id="GO:0009234">
    <property type="term" value="P:menaquinone biosynthetic process"/>
    <property type="evidence" value="ECO:0007669"/>
    <property type="project" value="UniProtKB-UniRule"/>
</dbReference>
<dbReference type="CDD" id="cd07037">
    <property type="entry name" value="TPP_PYR_MenD"/>
    <property type="match status" value="1"/>
</dbReference>
<dbReference type="CDD" id="cd02009">
    <property type="entry name" value="TPP_SHCHC_synthase"/>
    <property type="match status" value="1"/>
</dbReference>
<dbReference type="Gene3D" id="3.40.50.970">
    <property type="match status" value="2"/>
</dbReference>
<dbReference type="Gene3D" id="3.40.50.1220">
    <property type="entry name" value="TPP-binding domain"/>
    <property type="match status" value="1"/>
</dbReference>
<dbReference type="HAMAP" id="MF_01659">
    <property type="entry name" value="MenD"/>
    <property type="match status" value="1"/>
</dbReference>
<dbReference type="InterPro" id="IPR004433">
    <property type="entry name" value="MenaQ_synth_MenD"/>
</dbReference>
<dbReference type="InterPro" id="IPR029061">
    <property type="entry name" value="THDP-binding"/>
</dbReference>
<dbReference type="InterPro" id="IPR012001">
    <property type="entry name" value="Thiamin_PyroP_enz_TPP-bd_dom"/>
</dbReference>
<dbReference type="NCBIfam" id="TIGR00173">
    <property type="entry name" value="menD"/>
    <property type="match status" value="1"/>
</dbReference>
<dbReference type="PANTHER" id="PTHR42916">
    <property type="entry name" value="2-SUCCINYL-5-ENOLPYRUVYL-6-HYDROXY-3-CYCLOHEXENE-1-CARBOXYLATE SYNTHASE"/>
    <property type="match status" value="1"/>
</dbReference>
<dbReference type="PANTHER" id="PTHR42916:SF1">
    <property type="entry name" value="PROTEIN PHYLLO, CHLOROPLASTIC"/>
    <property type="match status" value="1"/>
</dbReference>
<dbReference type="Pfam" id="PF02776">
    <property type="entry name" value="TPP_enzyme_N"/>
    <property type="match status" value="1"/>
</dbReference>
<dbReference type="PIRSF" id="PIRSF004983">
    <property type="entry name" value="MenD"/>
    <property type="match status" value="1"/>
</dbReference>
<dbReference type="SUPFAM" id="SSF52518">
    <property type="entry name" value="Thiamin diphosphate-binding fold (THDP-binding)"/>
    <property type="match status" value="2"/>
</dbReference>
<organism>
    <name type="scientific">Mycolicibacterium vanbaalenii (strain DSM 7251 / JCM 13017 / BCRC 16820 / KCTC 9966 / NRRL B-24157 / PYR-1)</name>
    <name type="common">Mycobacterium vanbaalenii</name>
    <dbReference type="NCBI Taxonomy" id="350058"/>
    <lineage>
        <taxon>Bacteria</taxon>
        <taxon>Bacillati</taxon>
        <taxon>Actinomycetota</taxon>
        <taxon>Actinomycetes</taxon>
        <taxon>Mycobacteriales</taxon>
        <taxon>Mycobacteriaceae</taxon>
        <taxon>Mycolicibacterium</taxon>
    </lineage>
</organism>
<evidence type="ECO:0000255" key="1">
    <source>
        <dbReference type="HAMAP-Rule" id="MF_01659"/>
    </source>
</evidence>
<evidence type="ECO:0000305" key="2"/>
<feature type="chain" id="PRO_0000341788" description="2-succinyl-5-enolpyruvyl-6-hydroxy-3-cyclohexene-1-carboxylate synthase">
    <location>
        <begin position="1"/>
        <end position="548"/>
    </location>
</feature>
<comment type="function">
    <text evidence="1">Catalyzes the thiamine diphosphate-dependent decarboxylation of 2-oxoglutarate and the subsequent addition of the resulting succinic semialdehyde-thiamine pyrophosphate anion to isochorismate to yield 2-succinyl-5-enolpyruvyl-6-hydroxy-3-cyclohexene-1-carboxylate (SEPHCHC).</text>
</comment>
<comment type="catalytic activity">
    <reaction evidence="1">
        <text>isochorismate + 2-oxoglutarate + H(+) = 5-enolpyruvoyl-6-hydroxy-2-succinyl-cyclohex-3-ene-1-carboxylate + CO2</text>
        <dbReference type="Rhea" id="RHEA:25593"/>
        <dbReference type="ChEBI" id="CHEBI:15378"/>
        <dbReference type="ChEBI" id="CHEBI:16526"/>
        <dbReference type="ChEBI" id="CHEBI:16810"/>
        <dbReference type="ChEBI" id="CHEBI:29780"/>
        <dbReference type="ChEBI" id="CHEBI:58818"/>
        <dbReference type="EC" id="2.2.1.9"/>
    </reaction>
</comment>
<comment type="cofactor">
    <cofactor evidence="1">
        <name>Mg(2+)</name>
        <dbReference type="ChEBI" id="CHEBI:18420"/>
    </cofactor>
    <cofactor evidence="1">
        <name>Mn(2+)</name>
        <dbReference type="ChEBI" id="CHEBI:29035"/>
    </cofactor>
</comment>
<comment type="cofactor">
    <cofactor evidence="1">
        <name>thiamine diphosphate</name>
        <dbReference type="ChEBI" id="CHEBI:58937"/>
    </cofactor>
    <text evidence="1">Binds 1 thiamine pyrophosphate per subunit.</text>
</comment>
<comment type="pathway">
    <text evidence="1">Quinol/quinone metabolism; 1,4-dihydroxy-2-naphthoate biosynthesis; 1,4-dihydroxy-2-naphthoate from chorismate: step 2/7.</text>
</comment>
<comment type="pathway">
    <text evidence="1">Quinol/quinone metabolism; menaquinone biosynthesis.</text>
</comment>
<comment type="subunit">
    <text evidence="1">Homodimer.</text>
</comment>
<comment type="similarity">
    <text evidence="1">Belongs to the TPP enzyme family. MenD subfamily.</text>
</comment>
<comment type="sequence caution" evidence="2">
    <conflict type="erroneous initiation">
        <sequence resource="EMBL-CDS" id="ABM11813"/>
    </conflict>
</comment>
<keyword id="KW-0460">Magnesium</keyword>
<keyword id="KW-0464">Manganese</keyword>
<keyword id="KW-0474">Menaquinone biosynthesis</keyword>
<keyword id="KW-0479">Metal-binding</keyword>
<keyword id="KW-0786">Thiamine pyrophosphate</keyword>
<keyword id="KW-0808">Transferase</keyword>
<accession>A1T3R3</accession>
<sequence length="548" mass="57366">MNPSTAQARVVVDELIRGGVRDVVLCPGSRNAPLAFALHDADRAGRLRLHVRIDERTAGFLAIGLAVAERAPVCVAMTSGTAVANLGPAVVEANYARVPLIVLSANRPYELLGTGANQTFEQLGYFGTQVRANISLGLAPESGASALNFSALNGQWRSATCRVVVAATGARSANAGPVQFDIPLREPLVPDAQEPAVPYAPDGRPDGRPWTYTPPVTFDQPLDIDLTPDTVVIAGHGAGVHPNLAHLPTVAEPTAPAAQTPLHPLALRMIRPEQVIMLGRPTLHRPVSALLADPAVPVFALTTGPRWPDVSGNSQATGTRAVTAGAPAQAWLRRCAEANRHAVDAVRGQLAAHPLTTGLHVAAAVADALRPGDQLVLGASNPVRDIALVGFHTADVKVRSNRGVAGIDGTVSTAIGAALAHERSGGRTVALIGDLTFVHDSSGLLIGPTEPTPRKLTIVVSNDNGGGIFELLEQGDPRFSDVSSRIFGTPHDVDVGALCRAYHVESRQIEVGELAGALDEDFDGMRVLEVKADRSSLRALHASIRANL</sequence>